<name>SYM_ECO55</name>
<protein>
    <recommendedName>
        <fullName evidence="1">Methionine--tRNA ligase</fullName>
        <ecNumber evidence="1">6.1.1.10</ecNumber>
    </recommendedName>
    <alternativeName>
        <fullName evidence="1">Methionyl-tRNA synthetase</fullName>
        <shortName evidence="1">MetRS</shortName>
    </alternativeName>
</protein>
<organism>
    <name type="scientific">Escherichia coli (strain 55989 / EAEC)</name>
    <dbReference type="NCBI Taxonomy" id="585055"/>
    <lineage>
        <taxon>Bacteria</taxon>
        <taxon>Pseudomonadati</taxon>
        <taxon>Pseudomonadota</taxon>
        <taxon>Gammaproteobacteria</taxon>
        <taxon>Enterobacterales</taxon>
        <taxon>Enterobacteriaceae</taxon>
        <taxon>Escherichia</taxon>
    </lineage>
</organism>
<keyword id="KW-0030">Aminoacyl-tRNA synthetase</keyword>
<keyword id="KW-0067">ATP-binding</keyword>
<keyword id="KW-0963">Cytoplasm</keyword>
<keyword id="KW-0436">Ligase</keyword>
<keyword id="KW-0479">Metal-binding</keyword>
<keyword id="KW-0547">Nucleotide-binding</keyword>
<keyword id="KW-0648">Protein biosynthesis</keyword>
<keyword id="KW-1185">Reference proteome</keyword>
<keyword id="KW-0694">RNA-binding</keyword>
<keyword id="KW-0820">tRNA-binding</keyword>
<keyword id="KW-0862">Zinc</keyword>
<sequence>MTQVAKKILVTCALPYANGSIHLGHMLEHIQADVWVRYQRMRGHEVNFICADDAHGTPIMLKAQQLGITPEQMIGEMSQEHQTDFAGFNISYDNYHSTHSEENRQLSELIYSRLKENGFIKNRTISQLYDPEKGMFLPDRFVKGTCPKCKSPDQYGDNCEVCGATYSPTELIEPKSVVSGATPVMRDSEHFFFDLPSFSEMLQAWTRSGALQEQVANKMQEWFESGLQQWDISRDAPYFGFEIPNAPGKYFYVWLDAPIGYMGSFKNLCDKRGDSVSFDEYWKKDSTAELYHFIGKDIVYFHSLFWPAMLEGSNFRKPTNLFVHGYVTVNGAKMSKSRGTFIKASTWLNHFDADSLRYYYTAKLSSRIDDIDLNLEDFVQRVNADIVNKVVNLASRNAGFINKRFDGVLASELADPQLYKTFTDAAEVIGEAWESREFGKAVREIMALADLANRYVDEQAPWVVAKQEGRDADLQAICSMGINLFRVLMTYLKPVLPKLTERAEAFLNTELTWDGIQQPLLGHKVNPFKALYNRIDMKQVEALVEASKEEVKAAAAPVTGPLADDPIQETITFDDFAKVDLRVALIENAEFVEGSDKLLRLTLDLGGEKRNVFSGIRSAYPDPQALIGRHTIMVANLAPRKMRFGISEGMVMAAGPGGKDIFLLSPDAGAKPGHQVK</sequence>
<feature type="chain" id="PRO_1000118732" description="Methionine--tRNA ligase">
    <location>
        <begin position="1"/>
        <end position="677"/>
    </location>
</feature>
<feature type="domain" description="tRNA-binding" evidence="1">
    <location>
        <begin position="575"/>
        <end position="677"/>
    </location>
</feature>
<feature type="short sequence motif" description="'HIGH' region">
    <location>
        <begin position="15"/>
        <end position="25"/>
    </location>
</feature>
<feature type="short sequence motif" description="'KMSKS' region">
    <location>
        <begin position="333"/>
        <end position="337"/>
    </location>
</feature>
<feature type="binding site" evidence="1">
    <location>
        <position position="146"/>
    </location>
    <ligand>
        <name>Zn(2+)</name>
        <dbReference type="ChEBI" id="CHEBI:29105"/>
    </ligand>
</feature>
<feature type="binding site" evidence="1">
    <location>
        <position position="149"/>
    </location>
    <ligand>
        <name>Zn(2+)</name>
        <dbReference type="ChEBI" id="CHEBI:29105"/>
    </ligand>
</feature>
<feature type="binding site" evidence="1">
    <location>
        <position position="159"/>
    </location>
    <ligand>
        <name>Zn(2+)</name>
        <dbReference type="ChEBI" id="CHEBI:29105"/>
    </ligand>
</feature>
<feature type="binding site" evidence="1">
    <location>
        <position position="162"/>
    </location>
    <ligand>
        <name>Zn(2+)</name>
        <dbReference type="ChEBI" id="CHEBI:29105"/>
    </ligand>
</feature>
<feature type="binding site" evidence="1">
    <location>
        <position position="336"/>
    </location>
    <ligand>
        <name>ATP</name>
        <dbReference type="ChEBI" id="CHEBI:30616"/>
    </ligand>
</feature>
<dbReference type="EC" id="6.1.1.10" evidence="1"/>
<dbReference type="EMBL" id="CU928145">
    <property type="protein sequence ID" value="CAU98240.1"/>
    <property type="molecule type" value="Genomic_DNA"/>
</dbReference>
<dbReference type="RefSeq" id="WP_001295427.1">
    <property type="nucleotide sequence ID" value="NC_011748.1"/>
</dbReference>
<dbReference type="SMR" id="B7L9Y6"/>
<dbReference type="GeneID" id="75206361"/>
<dbReference type="KEGG" id="eck:EC55989_2369"/>
<dbReference type="HOGENOM" id="CLU_009710_7_0_6"/>
<dbReference type="Proteomes" id="UP000000746">
    <property type="component" value="Chromosome"/>
</dbReference>
<dbReference type="GO" id="GO:0005829">
    <property type="term" value="C:cytosol"/>
    <property type="evidence" value="ECO:0007669"/>
    <property type="project" value="TreeGrafter"/>
</dbReference>
<dbReference type="GO" id="GO:0005524">
    <property type="term" value="F:ATP binding"/>
    <property type="evidence" value="ECO:0007669"/>
    <property type="project" value="UniProtKB-UniRule"/>
</dbReference>
<dbReference type="GO" id="GO:0046872">
    <property type="term" value="F:metal ion binding"/>
    <property type="evidence" value="ECO:0007669"/>
    <property type="project" value="UniProtKB-KW"/>
</dbReference>
<dbReference type="GO" id="GO:0004825">
    <property type="term" value="F:methionine-tRNA ligase activity"/>
    <property type="evidence" value="ECO:0007669"/>
    <property type="project" value="UniProtKB-UniRule"/>
</dbReference>
<dbReference type="GO" id="GO:0000049">
    <property type="term" value="F:tRNA binding"/>
    <property type="evidence" value="ECO:0007669"/>
    <property type="project" value="UniProtKB-KW"/>
</dbReference>
<dbReference type="GO" id="GO:0006431">
    <property type="term" value="P:methionyl-tRNA aminoacylation"/>
    <property type="evidence" value="ECO:0007669"/>
    <property type="project" value="UniProtKB-UniRule"/>
</dbReference>
<dbReference type="CDD" id="cd07957">
    <property type="entry name" value="Anticodon_Ia_Met"/>
    <property type="match status" value="1"/>
</dbReference>
<dbReference type="CDD" id="cd00814">
    <property type="entry name" value="MetRS_core"/>
    <property type="match status" value="1"/>
</dbReference>
<dbReference type="CDD" id="cd02800">
    <property type="entry name" value="tRNA_bind_EcMetRS_like"/>
    <property type="match status" value="1"/>
</dbReference>
<dbReference type="FunFam" id="1.10.730.10:FF:000005">
    <property type="entry name" value="Methionine--tRNA ligase"/>
    <property type="match status" value="1"/>
</dbReference>
<dbReference type="FunFam" id="2.20.28.20:FF:000001">
    <property type="entry name" value="Methionine--tRNA ligase"/>
    <property type="match status" value="1"/>
</dbReference>
<dbReference type="FunFam" id="2.40.50.140:FF:000042">
    <property type="entry name" value="Methionine--tRNA ligase"/>
    <property type="match status" value="1"/>
</dbReference>
<dbReference type="Gene3D" id="3.40.50.620">
    <property type="entry name" value="HUPs"/>
    <property type="match status" value="1"/>
</dbReference>
<dbReference type="Gene3D" id="1.10.730.10">
    <property type="entry name" value="Isoleucyl-tRNA Synthetase, Domain 1"/>
    <property type="match status" value="1"/>
</dbReference>
<dbReference type="Gene3D" id="2.20.28.20">
    <property type="entry name" value="Methionyl-tRNA synthetase, Zn-domain"/>
    <property type="match status" value="1"/>
</dbReference>
<dbReference type="Gene3D" id="2.40.50.140">
    <property type="entry name" value="Nucleic acid-binding proteins"/>
    <property type="match status" value="1"/>
</dbReference>
<dbReference type="HAMAP" id="MF_00098">
    <property type="entry name" value="Met_tRNA_synth_type1"/>
    <property type="match status" value="1"/>
</dbReference>
<dbReference type="InterPro" id="IPR001412">
    <property type="entry name" value="aa-tRNA-synth_I_CS"/>
</dbReference>
<dbReference type="InterPro" id="IPR041872">
    <property type="entry name" value="Anticodon_Met"/>
</dbReference>
<dbReference type="InterPro" id="IPR004495">
    <property type="entry name" value="Met-tRNA-synth_bsu_C"/>
</dbReference>
<dbReference type="InterPro" id="IPR023458">
    <property type="entry name" value="Met-tRNA_ligase_1"/>
</dbReference>
<dbReference type="InterPro" id="IPR014758">
    <property type="entry name" value="Met-tRNA_synth"/>
</dbReference>
<dbReference type="InterPro" id="IPR015413">
    <property type="entry name" value="Methionyl/Leucyl_tRNA_Synth"/>
</dbReference>
<dbReference type="InterPro" id="IPR033911">
    <property type="entry name" value="MetRS_core"/>
</dbReference>
<dbReference type="InterPro" id="IPR029038">
    <property type="entry name" value="MetRS_Zn"/>
</dbReference>
<dbReference type="InterPro" id="IPR012340">
    <property type="entry name" value="NA-bd_OB-fold"/>
</dbReference>
<dbReference type="InterPro" id="IPR014729">
    <property type="entry name" value="Rossmann-like_a/b/a_fold"/>
</dbReference>
<dbReference type="InterPro" id="IPR002547">
    <property type="entry name" value="tRNA-bd_dom"/>
</dbReference>
<dbReference type="InterPro" id="IPR009080">
    <property type="entry name" value="tRNAsynth_Ia_anticodon-bd"/>
</dbReference>
<dbReference type="NCBIfam" id="TIGR00398">
    <property type="entry name" value="metG"/>
    <property type="match status" value="1"/>
</dbReference>
<dbReference type="NCBIfam" id="TIGR00399">
    <property type="entry name" value="metG_C_term"/>
    <property type="match status" value="1"/>
</dbReference>
<dbReference type="NCBIfam" id="NF001100">
    <property type="entry name" value="PRK00133.1"/>
    <property type="match status" value="1"/>
</dbReference>
<dbReference type="PANTHER" id="PTHR45765">
    <property type="entry name" value="METHIONINE--TRNA LIGASE"/>
    <property type="match status" value="1"/>
</dbReference>
<dbReference type="PANTHER" id="PTHR45765:SF1">
    <property type="entry name" value="METHIONINE--TRNA LIGASE, CYTOPLASMIC"/>
    <property type="match status" value="1"/>
</dbReference>
<dbReference type="Pfam" id="PF19303">
    <property type="entry name" value="Anticodon_3"/>
    <property type="match status" value="1"/>
</dbReference>
<dbReference type="Pfam" id="PF09334">
    <property type="entry name" value="tRNA-synt_1g"/>
    <property type="match status" value="1"/>
</dbReference>
<dbReference type="Pfam" id="PF01588">
    <property type="entry name" value="tRNA_bind"/>
    <property type="match status" value="1"/>
</dbReference>
<dbReference type="PRINTS" id="PR01041">
    <property type="entry name" value="TRNASYNTHMET"/>
</dbReference>
<dbReference type="SUPFAM" id="SSF47323">
    <property type="entry name" value="Anticodon-binding domain of a subclass of class I aminoacyl-tRNA synthetases"/>
    <property type="match status" value="1"/>
</dbReference>
<dbReference type="SUPFAM" id="SSF57770">
    <property type="entry name" value="Methionyl-tRNA synthetase (MetRS), Zn-domain"/>
    <property type="match status" value="1"/>
</dbReference>
<dbReference type="SUPFAM" id="SSF50249">
    <property type="entry name" value="Nucleic acid-binding proteins"/>
    <property type="match status" value="1"/>
</dbReference>
<dbReference type="SUPFAM" id="SSF52374">
    <property type="entry name" value="Nucleotidylyl transferase"/>
    <property type="match status" value="1"/>
</dbReference>
<dbReference type="PROSITE" id="PS00178">
    <property type="entry name" value="AA_TRNA_LIGASE_I"/>
    <property type="match status" value="1"/>
</dbReference>
<dbReference type="PROSITE" id="PS50886">
    <property type="entry name" value="TRBD"/>
    <property type="match status" value="1"/>
</dbReference>
<accession>B7L9Y6</accession>
<evidence type="ECO:0000255" key="1">
    <source>
        <dbReference type="HAMAP-Rule" id="MF_00098"/>
    </source>
</evidence>
<reference key="1">
    <citation type="journal article" date="2009" name="PLoS Genet.">
        <title>Organised genome dynamics in the Escherichia coli species results in highly diverse adaptive paths.</title>
        <authorList>
            <person name="Touchon M."/>
            <person name="Hoede C."/>
            <person name="Tenaillon O."/>
            <person name="Barbe V."/>
            <person name="Baeriswyl S."/>
            <person name="Bidet P."/>
            <person name="Bingen E."/>
            <person name="Bonacorsi S."/>
            <person name="Bouchier C."/>
            <person name="Bouvet O."/>
            <person name="Calteau A."/>
            <person name="Chiapello H."/>
            <person name="Clermont O."/>
            <person name="Cruveiller S."/>
            <person name="Danchin A."/>
            <person name="Diard M."/>
            <person name="Dossat C."/>
            <person name="Karoui M.E."/>
            <person name="Frapy E."/>
            <person name="Garry L."/>
            <person name="Ghigo J.M."/>
            <person name="Gilles A.M."/>
            <person name="Johnson J."/>
            <person name="Le Bouguenec C."/>
            <person name="Lescat M."/>
            <person name="Mangenot S."/>
            <person name="Martinez-Jehanne V."/>
            <person name="Matic I."/>
            <person name="Nassif X."/>
            <person name="Oztas S."/>
            <person name="Petit M.A."/>
            <person name="Pichon C."/>
            <person name="Rouy Z."/>
            <person name="Ruf C.S."/>
            <person name="Schneider D."/>
            <person name="Tourret J."/>
            <person name="Vacherie B."/>
            <person name="Vallenet D."/>
            <person name="Medigue C."/>
            <person name="Rocha E.P.C."/>
            <person name="Denamur E."/>
        </authorList>
    </citation>
    <scope>NUCLEOTIDE SEQUENCE [LARGE SCALE GENOMIC DNA]</scope>
    <source>
        <strain>55989 / EAEC</strain>
    </source>
</reference>
<proteinExistence type="inferred from homology"/>
<gene>
    <name evidence="1" type="primary">metG</name>
    <name type="ordered locus">EC55989_2369</name>
</gene>
<comment type="function">
    <text evidence="1">Is required not only for elongation of protein synthesis but also for the initiation of all mRNA translation through initiator tRNA(fMet) aminoacylation.</text>
</comment>
<comment type="catalytic activity">
    <reaction evidence="1">
        <text>tRNA(Met) + L-methionine + ATP = L-methionyl-tRNA(Met) + AMP + diphosphate</text>
        <dbReference type="Rhea" id="RHEA:13481"/>
        <dbReference type="Rhea" id="RHEA-COMP:9667"/>
        <dbReference type="Rhea" id="RHEA-COMP:9698"/>
        <dbReference type="ChEBI" id="CHEBI:30616"/>
        <dbReference type="ChEBI" id="CHEBI:33019"/>
        <dbReference type="ChEBI" id="CHEBI:57844"/>
        <dbReference type="ChEBI" id="CHEBI:78442"/>
        <dbReference type="ChEBI" id="CHEBI:78530"/>
        <dbReference type="ChEBI" id="CHEBI:456215"/>
        <dbReference type="EC" id="6.1.1.10"/>
    </reaction>
</comment>
<comment type="cofactor">
    <cofactor evidence="1">
        <name>Zn(2+)</name>
        <dbReference type="ChEBI" id="CHEBI:29105"/>
    </cofactor>
    <text evidence="1">Binds 1 zinc ion per subunit.</text>
</comment>
<comment type="subunit">
    <text evidence="1">Homodimer.</text>
</comment>
<comment type="subcellular location">
    <subcellularLocation>
        <location evidence="1">Cytoplasm</location>
    </subcellularLocation>
</comment>
<comment type="similarity">
    <text evidence="1">Belongs to the class-I aminoacyl-tRNA synthetase family. MetG type 1 subfamily.</text>
</comment>